<organism>
    <name type="scientific">Buchnera aphidicola subsp. Cinara cedri (strain Cc)</name>
    <dbReference type="NCBI Taxonomy" id="372461"/>
    <lineage>
        <taxon>Bacteria</taxon>
        <taxon>Pseudomonadati</taxon>
        <taxon>Pseudomonadota</taxon>
        <taxon>Gammaproteobacteria</taxon>
        <taxon>Enterobacterales</taxon>
        <taxon>Erwiniaceae</taxon>
        <taxon>Buchnera</taxon>
    </lineage>
</organism>
<feature type="chain" id="PRO_1000051019" description="Small ribosomal subunit protein uS19">
    <location>
        <begin position="1"/>
        <end position="94"/>
    </location>
</feature>
<proteinExistence type="inferred from homology"/>
<gene>
    <name evidence="1" type="primary">rpsS</name>
    <name type="ordered locus">BCc_337</name>
</gene>
<name>RS19_BUCCC</name>
<accession>Q057A8</accession>
<keyword id="KW-1185">Reference proteome</keyword>
<keyword id="KW-0687">Ribonucleoprotein</keyword>
<keyword id="KW-0689">Ribosomal protein</keyword>
<keyword id="KW-0694">RNA-binding</keyword>
<keyword id="KW-0699">rRNA-binding</keyword>
<comment type="function">
    <text evidence="1">Protein S19 forms a complex with S13 that binds strongly to the 16S ribosomal RNA.</text>
</comment>
<comment type="similarity">
    <text evidence="1">Belongs to the universal ribosomal protein uS19 family.</text>
</comment>
<sequence length="94" mass="10890">MPRSLKKGPFIDIHLLKKIQKSLKLTNKKSIRTWSRRSTIFPNMVGLTISIHNGRQHVPVFITEEMVGHKLGEFSITRTYRGHTADKKIKKPIK</sequence>
<protein>
    <recommendedName>
        <fullName evidence="1">Small ribosomal subunit protein uS19</fullName>
    </recommendedName>
    <alternativeName>
        <fullName evidence="2">30S ribosomal protein S19</fullName>
    </alternativeName>
</protein>
<reference key="1">
    <citation type="journal article" date="2006" name="Science">
        <title>A small microbial genome: the end of a long symbiotic relationship?</title>
        <authorList>
            <person name="Perez-Brocal V."/>
            <person name="Gil R."/>
            <person name="Ramos S."/>
            <person name="Lamelas A."/>
            <person name="Postigo M."/>
            <person name="Michelena J.M."/>
            <person name="Silva F.J."/>
            <person name="Moya A."/>
            <person name="Latorre A."/>
        </authorList>
    </citation>
    <scope>NUCLEOTIDE SEQUENCE [LARGE SCALE GENOMIC DNA]</scope>
    <source>
        <strain>Cc</strain>
    </source>
</reference>
<evidence type="ECO:0000255" key="1">
    <source>
        <dbReference type="HAMAP-Rule" id="MF_00531"/>
    </source>
</evidence>
<evidence type="ECO:0000305" key="2"/>
<dbReference type="EMBL" id="CP000263">
    <property type="protein sequence ID" value="ABJ90791.1"/>
    <property type="molecule type" value="Genomic_DNA"/>
</dbReference>
<dbReference type="RefSeq" id="WP_011672710.1">
    <property type="nucleotide sequence ID" value="NC_008513.1"/>
</dbReference>
<dbReference type="SMR" id="Q057A8"/>
<dbReference type="STRING" id="372461.BCc_337"/>
<dbReference type="KEGG" id="bcc:BCc_337"/>
<dbReference type="eggNOG" id="COG0185">
    <property type="taxonomic scope" value="Bacteria"/>
</dbReference>
<dbReference type="HOGENOM" id="CLU_144911_0_1_6"/>
<dbReference type="OrthoDB" id="9797833at2"/>
<dbReference type="Proteomes" id="UP000000669">
    <property type="component" value="Chromosome"/>
</dbReference>
<dbReference type="GO" id="GO:0005737">
    <property type="term" value="C:cytoplasm"/>
    <property type="evidence" value="ECO:0007669"/>
    <property type="project" value="UniProtKB-ARBA"/>
</dbReference>
<dbReference type="GO" id="GO:0015935">
    <property type="term" value="C:small ribosomal subunit"/>
    <property type="evidence" value="ECO:0007669"/>
    <property type="project" value="InterPro"/>
</dbReference>
<dbReference type="GO" id="GO:0019843">
    <property type="term" value="F:rRNA binding"/>
    <property type="evidence" value="ECO:0007669"/>
    <property type="project" value="UniProtKB-UniRule"/>
</dbReference>
<dbReference type="GO" id="GO:0003735">
    <property type="term" value="F:structural constituent of ribosome"/>
    <property type="evidence" value="ECO:0007669"/>
    <property type="project" value="InterPro"/>
</dbReference>
<dbReference type="GO" id="GO:0000028">
    <property type="term" value="P:ribosomal small subunit assembly"/>
    <property type="evidence" value="ECO:0007669"/>
    <property type="project" value="TreeGrafter"/>
</dbReference>
<dbReference type="GO" id="GO:0006412">
    <property type="term" value="P:translation"/>
    <property type="evidence" value="ECO:0007669"/>
    <property type="project" value="UniProtKB-UniRule"/>
</dbReference>
<dbReference type="FunFam" id="3.30.860.10:FF:000001">
    <property type="entry name" value="30S ribosomal protein S19"/>
    <property type="match status" value="1"/>
</dbReference>
<dbReference type="Gene3D" id="3.30.860.10">
    <property type="entry name" value="30s Ribosomal Protein S19, Chain A"/>
    <property type="match status" value="1"/>
</dbReference>
<dbReference type="HAMAP" id="MF_00531">
    <property type="entry name" value="Ribosomal_uS19"/>
    <property type="match status" value="1"/>
</dbReference>
<dbReference type="InterPro" id="IPR002222">
    <property type="entry name" value="Ribosomal_uS19"/>
</dbReference>
<dbReference type="InterPro" id="IPR005732">
    <property type="entry name" value="Ribosomal_uS19_bac-type"/>
</dbReference>
<dbReference type="InterPro" id="IPR020934">
    <property type="entry name" value="Ribosomal_uS19_CS"/>
</dbReference>
<dbReference type="InterPro" id="IPR023575">
    <property type="entry name" value="Ribosomal_uS19_SF"/>
</dbReference>
<dbReference type="NCBIfam" id="TIGR01050">
    <property type="entry name" value="rpsS_bact"/>
    <property type="match status" value="1"/>
</dbReference>
<dbReference type="PANTHER" id="PTHR11880">
    <property type="entry name" value="RIBOSOMAL PROTEIN S19P FAMILY MEMBER"/>
    <property type="match status" value="1"/>
</dbReference>
<dbReference type="PANTHER" id="PTHR11880:SF8">
    <property type="entry name" value="SMALL RIBOSOMAL SUBUNIT PROTEIN US19M"/>
    <property type="match status" value="1"/>
</dbReference>
<dbReference type="Pfam" id="PF00203">
    <property type="entry name" value="Ribosomal_S19"/>
    <property type="match status" value="1"/>
</dbReference>
<dbReference type="PIRSF" id="PIRSF002144">
    <property type="entry name" value="Ribosomal_S19"/>
    <property type="match status" value="1"/>
</dbReference>
<dbReference type="PRINTS" id="PR00975">
    <property type="entry name" value="RIBOSOMALS19"/>
</dbReference>
<dbReference type="SUPFAM" id="SSF54570">
    <property type="entry name" value="Ribosomal protein S19"/>
    <property type="match status" value="1"/>
</dbReference>
<dbReference type="PROSITE" id="PS00323">
    <property type="entry name" value="RIBOSOMAL_S19"/>
    <property type="match status" value="1"/>
</dbReference>